<gene>
    <name evidence="1" type="primary">aat</name>
    <name type="ordered locus">GFO_3042</name>
</gene>
<dbReference type="EC" id="2.3.2.6" evidence="1"/>
<dbReference type="EMBL" id="CU207366">
    <property type="protein sequence ID" value="CAL67986.1"/>
    <property type="molecule type" value="Genomic_DNA"/>
</dbReference>
<dbReference type="RefSeq" id="WP_011710887.1">
    <property type="nucleotide sequence ID" value="NC_008571.1"/>
</dbReference>
<dbReference type="SMR" id="A0M5U1"/>
<dbReference type="STRING" id="411154.GFO_3042"/>
<dbReference type="KEGG" id="gfo:GFO_3042"/>
<dbReference type="eggNOG" id="COG2360">
    <property type="taxonomic scope" value="Bacteria"/>
</dbReference>
<dbReference type="HOGENOM" id="CLU_075045_0_0_10"/>
<dbReference type="OrthoDB" id="9790282at2"/>
<dbReference type="Proteomes" id="UP000000755">
    <property type="component" value="Chromosome"/>
</dbReference>
<dbReference type="GO" id="GO:0005737">
    <property type="term" value="C:cytoplasm"/>
    <property type="evidence" value="ECO:0007669"/>
    <property type="project" value="UniProtKB-SubCell"/>
</dbReference>
<dbReference type="GO" id="GO:0008914">
    <property type="term" value="F:leucyl-tRNA--protein transferase activity"/>
    <property type="evidence" value="ECO:0007669"/>
    <property type="project" value="UniProtKB-UniRule"/>
</dbReference>
<dbReference type="GO" id="GO:0030163">
    <property type="term" value="P:protein catabolic process"/>
    <property type="evidence" value="ECO:0007669"/>
    <property type="project" value="UniProtKB-UniRule"/>
</dbReference>
<dbReference type="Gene3D" id="3.40.630.70">
    <property type="entry name" value="Leucyl/phenylalanyl-tRNA-protein transferase, C-terminal domain"/>
    <property type="match status" value="1"/>
</dbReference>
<dbReference type="Gene3D" id="3.30.70.3550">
    <property type="entry name" value="Leucyl/phenylalanyl-tRNA-protein transferase, N-terminal domain"/>
    <property type="match status" value="1"/>
</dbReference>
<dbReference type="HAMAP" id="MF_00688">
    <property type="entry name" value="Leu_Phe_trans"/>
    <property type="match status" value="1"/>
</dbReference>
<dbReference type="InterPro" id="IPR016181">
    <property type="entry name" value="Acyl_CoA_acyltransferase"/>
</dbReference>
<dbReference type="InterPro" id="IPR004616">
    <property type="entry name" value="Leu/Phe-tRNA_Trfase"/>
</dbReference>
<dbReference type="InterPro" id="IPR042203">
    <property type="entry name" value="Leu/Phe-tRNA_Trfase_C"/>
</dbReference>
<dbReference type="InterPro" id="IPR042221">
    <property type="entry name" value="Leu/Phe-tRNA_Trfase_N"/>
</dbReference>
<dbReference type="NCBIfam" id="TIGR00667">
    <property type="entry name" value="aat"/>
    <property type="match status" value="1"/>
</dbReference>
<dbReference type="PANTHER" id="PTHR30098">
    <property type="entry name" value="LEUCYL/PHENYLALANYL-TRNA--PROTEIN TRANSFERASE"/>
    <property type="match status" value="1"/>
</dbReference>
<dbReference type="PANTHER" id="PTHR30098:SF2">
    <property type="entry name" value="LEUCYL_PHENYLALANYL-TRNA--PROTEIN TRANSFERASE"/>
    <property type="match status" value="1"/>
</dbReference>
<dbReference type="Pfam" id="PF03588">
    <property type="entry name" value="Leu_Phe_trans"/>
    <property type="match status" value="1"/>
</dbReference>
<dbReference type="SUPFAM" id="SSF55729">
    <property type="entry name" value="Acyl-CoA N-acyltransferases (Nat)"/>
    <property type="match status" value="1"/>
</dbReference>
<name>LFTR_CHRFK</name>
<accession>A0M5U1</accession>
<feature type="chain" id="PRO_1000062008" description="Leucyl/phenylalanyl-tRNA--protein transferase">
    <location>
        <begin position="1"/>
        <end position="212"/>
    </location>
</feature>
<reference key="1">
    <citation type="journal article" date="2006" name="Environ. Microbiol.">
        <title>Whole genome analysis of the marine Bacteroidetes'Gramella forsetii' reveals adaptations to degradation of polymeric organic matter.</title>
        <authorList>
            <person name="Bauer M."/>
            <person name="Kube M."/>
            <person name="Teeling H."/>
            <person name="Richter M."/>
            <person name="Lombardot T."/>
            <person name="Allers E."/>
            <person name="Wuerdemann C.A."/>
            <person name="Quast C."/>
            <person name="Kuhl H."/>
            <person name="Knaust F."/>
            <person name="Woebken D."/>
            <person name="Bischof K."/>
            <person name="Mussmann M."/>
            <person name="Choudhuri J.V."/>
            <person name="Meyer F."/>
            <person name="Reinhardt R."/>
            <person name="Amann R.I."/>
            <person name="Gloeckner F.O."/>
        </authorList>
    </citation>
    <scope>NUCLEOTIDE SEQUENCE [LARGE SCALE GENOMIC DNA]</scope>
    <source>
        <strain>DSM 17595 / CGMCC 1.15422 / KT0803</strain>
    </source>
</reference>
<proteinExistence type="inferred from homology"/>
<organism>
    <name type="scientific">Christiangramia forsetii (strain DSM 17595 / CGMCC 1.15422 / KT0803)</name>
    <name type="common">Gramella forsetii</name>
    <dbReference type="NCBI Taxonomy" id="411154"/>
    <lineage>
        <taxon>Bacteria</taxon>
        <taxon>Pseudomonadati</taxon>
        <taxon>Bacteroidota</taxon>
        <taxon>Flavobacteriia</taxon>
        <taxon>Flavobacteriales</taxon>
        <taxon>Flavobacteriaceae</taxon>
        <taxon>Christiangramia</taxon>
    </lineage>
</organism>
<sequence length="212" mass="24487">MYFINPQEKFPPVSFADEDGLLAVTRDLSPDRLMEAYYKGIFPWYNEGQPVLWWSPDPRMVLFPENLKIAKSMRPYLNQDKFQVTFNQEFEKVIEACGNVNREGQDGTWITPEIKENYLKLHQEGIAVSTEVWEGSMLVGGLYGIYLKDKKVFCGESMFSKASNASKFGFIKLVQKLEKEGVKLIDCQIYTSHLESLGAEEIDRIEFLKFLI</sequence>
<protein>
    <recommendedName>
        <fullName evidence="1">Leucyl/phenylalanyl-tRNA--protein transferase</fullName>
        <ecNumber evidence="1">2.3.2.6</ecNumber>
    </recommendedName>
    <alternativeName>
        <fullName evidence="1">L/F-transferase</fullName>
    </alternativeName>
    <alternativeName>
        <fullName evidence="1">Leucyltransferase</fullName>
    </alternativeName>
    <alternativeName>
        <fullName evidence="1">Phenyalanyltransferase</fullName>
    </alternativeName>
</protein>
<keyword id="KW-0012">Acyltransferase</keyword>
<keyword id="KW-0963">Cytoplasm</keyword>
<keyword id="KW-0808">Transferase</keyword>
<comment type="function">
    <text evidence="1">Functions in the N-end rule pathway of protein degradation where it conjugates Leu, Phe and, less efficiently, Met from aminoacyl-tRNAs to the N-termini of proteins containing an N-terminal arginine or lysine.</text>
</comment>
<comment type="catalytic activity">
    <reaction evidence="1">
        <text>N-terminal L-lysyl-[protein] + L-leucyl-tRNA(Leu) = N-terminal L-leucyl-L-lysyl-[protein] + tRNA(Leu) + H(+)</text>
        <dbReference type="Rhea" id="RHEA:12340"/>
        <dbReference type="Rhea" id="RHEA-COMP:9613"/>
        <dbReference type="Rhea" id="RHEA-COMP:9622"/>
        <dbReference type="Rhea" id="RHEA-COMP:12670"/>
        <dbReference type="Rhea" id="RHEA-COMP:12671"/>
        <dbReference type="ChEBI" id="CHEBI:15378"/>
        <dbReference type="ChEBI" id="CHEBI:65249"/>
        <dbReference type="ChEBI" id="CHEBI:78442"/>
        <dbReference type="ChEBI" id="CHEBI:78494"/>
        <dbReference type="ChEBI" id="CHEBI:133043"/>
        <dbReference type="EC" id="2.3.2.6"/>
    </reaction>
</comment>
<comment type="catalytic activity">
    <reaction evidence="1">
        <text>N-terminal L-arginyl-[protein] + L-leucyl-tRNA(Leu) = N-terminal L-leucyl-L-arginyl-[protein] + tRNA(Leu) + H(+)</text>
        <dbReference type="Rhea" id="RHEA:50416"/>
        <dbReference type="Rhea" id="RHEA-COMP:9613"/>
        <dbReference type="Rhea" id="RHEA-COMP:9622"/>
        <dbReference type="Rhea" id="RHEA-COMP:12672"/>
        <dbReference type="Rhea" id="RHEA-COMP:12673"/>
        <dbReference type="ChEBI" id="CHEBI:15378"/>
        <dbReference type="ChEBI" id="CHEBI:64719"/>
        <dbReference type="ChEBI" id="CHEBI:78442"/>
        <dbReference type="ChEBI" id="CHEBI:78494"/>
        <dbReference type="ChEBI" id="CHEBI:133044"/>
        <dbReference type="EC" id="2.3.2.6"/>
    </reaction>
</comment>
<comment type="catalytic activity">
    <reaction evidence="1">
        <text>L-phenylalanyl-tRNA(Phe) + an N-terminal L-alpha-aminoacyl-[protein] = an N-terminal L-phenylalanyl-L-alpha-aminoacyl-[protein] + tRNA(Phe)</text>
        <dbReference type="Rhea" id="RHEA:43632"/>
        <dbReference type="Rhea" id="RHEA-COMP:9668"/>
        <dbReference type="Rhea" id="RHEA-COMP:9699"/>
        <dbReference type="Rhea" id="RHEA-COMP:10636"/>
        <dbReference type="Rhea" id="RHEA-COMP:10637"/>
        <dbReference type="ChEBI" id="CHEBI:78442"/>
        <dbReference type="ChEBI" id="CHEBI:78531"/>
        <dbReference type="ChEBI" id="CHEBI:78597"/>
        <dbReference type="ChEBI" id="CHEBI:83561"/>
        <dbReference type="EC" id="2.3.2.6"/>
    </reaction>
</comment>
<comment type="subcellular location">
    <subcellularLocation>
        <location evidence="1">Cytoplasm</location>
    </subcellularLocation>
</comment>
<comment type="similarity">
    <text evidence="1">Belongs to the L/F-transferase family.</text>
</comment>
<evidence type="ECO:0000255" key="1">
    <source>
        <dbReference type="HAMAP-Rule" id="MF_00688"/>
    </source>
</evidence>